<organism>
    <name type="scientific">Salmonella typhimurium (strain LT2 / SGSC1412 / ATCC 700720)</name>
    <dbReference type="NCBI Taxonomy" id="99287"/>
    <lineage>
        <taxon>Bacteria</taxon>
        <taxon>Pseudomonadati</taxon>
        <taxon>Pseudomonadota</taxon>
        <taxon>Gammaproteobacteria</taxon>
        <taxon>Enterobacterales</taxon>
        <taxon>Enterobacteriaceae</taxon>
        <taxon>Salmonella</taxon>
    </lineage>
</organism>
<protein>
    <recommendedName>
        <fullName>Peptidyl-prolyl cis-trans isomerase C</fullName>
        <shortName>PPIase C</shortName>
        <ecNumber>5.2.1.8</ecNumber>
    </recommendedName>
    <alternativeName>
        <fullName>Parvulin</fullName>
    </alternativeName>
    <alternativeName>
        <fullName>Rotamase C</fullName>
    </alternativeName>
</protein>
<proteinExistence type="inferred from homology"/>
<keyword id="KW-0963">Cytoplasm</keyword>
<keyword id="KW-0413">Isomerase</keyword>
<keyword id="KW-1185">Reference proteome</keyword>
<keyword id="KW-0697">Rotamase</keyword>
<accession>P0A265</accession>
<accession>Q9L6S3</accession>
<comment type="function">
    <text evidence="1">PPIases accelerate the folding of proteins. It prefers amino acid residues with hydrophobic side chains like leucine and phenylalanine in the P1 position of the peptides substrates (By similarity).</text>
</comment>
<comment type="catalytic activity">
    <reaction>
        <text>[protein]-peptidylproline (omega=180) = [protein]-peptidylproline (omega=0)</text>
        <dbReference type="Rhea" id="RHEA:16237"/>
        <dbReference type="Rhea" id="RHEA-COMP:10747"/>
        <dbReference type="Rhea" id="RHEA-COMP:10748"/>
        <dbReference type="ChEBI" id="CHEBI:83833"/>
        <dbReference type="ChEBI" id="CHEBI:83834"/>
        <dbReference type="EC" id="5.2.1.8"/>
    </reaction>
</comment>
<comment type="subcellular location">
    <subcellularLocation>
        <location evidence="1">Cytoplasm</location>
    </subcellularLocation>
</comment>
<comment type="similarity">
    <text evidence="3">Belongs to the PpiC/parvulin rotamase family.</text>
</comment>
<evidence type="ECO:0000250" key="1"/>
<evidence type="ECO:0000255" key="2">
    <source>
        <dbReference type="PROSITE-ProRule" id="PRU00278"/>
    </source>
</evidence>
<evidence type="ECO:0000305" key="3"/>
<reference key="1">
    <citation type="journal article" date="2001" name="Nature">
        <title>Complete genome sequence of Salmonella enterica serovar Typhimurium LT2.</title>
        <authorList>
            <person name="McClelland M."/>
            <person name="Sanderson K.E."/>
            <person name="Spieth J."/>
            <person name="Clifton S.W."/>
            <person name="Latreille P."/>
            <person name="Courtney L."/>
            <person name="Porwollik S."/>
            <person name="Ali J."/>
            <person name="Dante M."/>
            <person name="Du F."/>
            <person name="Hou S."/>
            <person name="Layman D."/>
            <person name="Leonard S."/>
            <person name="Nguyen C."/>
            <person name="Scott K."/>
            <person name="Holmes A."/>
            <person name="Grewal N."/>
            <person name="Mulvaney E."/>
            <person name="Ryan E."/>
            <person name="Sun H."/>
            <person name="Florea L."/>
            <person name="Miller W."/>
            <person name="Stoneking T."/>
            <person name="Nhan M."/>
            <person name="Waterston R."/>
            <person name="Wilson R.K."/>
        </authorList>
    </citation>
    <scope>NUCLEOTIDE SEQUENCE [LARGE SCALE GENOMIC DNA]</scope>
    <source>
        <strain>LT2 / SGSC1412 / ATCC 700720</strain>
    </source>
</reference>
<feature type="initiator methionine" description="Removed" evidence="1">
    <location>
        <position position="1"/>
    </location>
</feature>
<feature type="chain" id="PRO_0000193419" description="Peptidyl-prolyl cis-trans isomerase C">
    <location>
        <begin position="2"/>
        <end position="93"/>
    </location>
</feature>
<feature type="domain" description="PpiC" evidence="2">
    <location>
        <begin position="2"/>
        <end position="91"/>
    </location>
</feature>
<dbReference type="EC" id="5.2.1.8"/>
<dbReference type="EMBL" id="AF233324">
    <property type="protein sequence ID" value="AAF33475.1"/>
    <property type="molecule type" value="Genomic_DNA"/>
</dbReference>
<dbReference type="EMBL" id="AE006468">
    <property type="protein sequence ID" value="AAL22760.1"/>
    <property type="molecule type" value="Genomic_DNA"/>
</dbReference>
<dbReference type="RefSeq" id="NP_462801.1">
    <property type="nucleotide sequence ID" value="NC_003197.2"/>
</dbReference>
<dbReference type="RefSeq" id="WP_001096806.1">
    <property type="nucleotide sequence ID" value="NC_003197.2"/>
</dbReference>
<dbReference type="SMR" id="P0A265"/>
<dbReference type="STRING" id="99287.STM3910"/>
<dbReference type="PaxDb" id="99287-STM3910"/>
<dbReference type="GeneID" id="1255436"/>
<dbReference type="KEGG" id="stm:STM3910"/>
<dbReference type="PATRIC" id="fig|99287.12.peg.4132"/>
<dbReference type="HOGENOM" id="CLU_090028_6_1_6"/>
<dbReference type="OMA" id="GPVRTQF"/>
<dbReference type="PhylomeDB" id="P0A265"/>
<dbReference type="BioCyc" id="SENT99287:STM3910-MONOMER"/>
<dbReference type="Proteomes" id="UP000001014">
    <property type="component" value="Chromosome"/>
</dbReference>
<dbReference type="GO" id="GO:0005737">
    <property type="term" value="C:cytoplasm"/>
    <property type="evidence" value="ECO:0007669"/>
    <property type="project" value="UniProtKB-SubCell"/>
</dbReference>
<dbReference type="GO" id="GO:0003755">
    <property type="term" value="F:peptidyl-prolyl cis-trans isomerase activity"/>
    <property type="evidence" value="ECO:0007669"/>
    <property type="project" value="UniProtKB-KW"/>
</dbReference>
<dbReference type="FunFam" id="3.10.50.40:FF:000003">
    <property type="entry name" value="Peptidylprolyl isomerase"/>
    <property type="match status" value="1"/>
</dbReference>
<dbReference type="Gene3D" id="3.10.50.40">
    <property type="match status" value="1"/>
</dbReference>
<dbReference type="InterPro" id="IPR046357">
    <property type="entry name" value="PPIase_dom_sf"/>
</dbReference>
<dbReference type="InterPro" id="IPR000297">
    <property type="entry name" value="PPIase_PpiC"/>
</dbReference>
<dbReference type="InterPro" id="IPR023058">
    <property type="entry name" value="PPIase_PpiC_CS"/>
</dbReference>
<dbReference type="InterPro" id="IPR052204">
    <property type="entry name" value="PpiC/parvulin_rotamase"/>
</dbReference>
<dbReference type="NCBIfam" id="NF011969">
    <property type="entry name" value="PRK15441.1"/>
    <property type="match status" value="1"/>
</dbReference>
<dbReference type="PANTHER" id="PTHR43629">
    <property type="entry name" value="PEPTIDYL-PROLYL CIS-TRANS ISOMERASE"/>
    <property type="match status" value="1"/>
</dbReference>
<dbReference type="PANTHER" id="PTHR43629:SF3">
    <property type="entry name" value="PEPTIDYL-PROLYL CIS-TRANS ISOMERASE C"/>
    <property type="match status" value="1"/>
</dbReference>
<dbReference type="Pfam" id="PF13616">
    <property type="entry name" value="Rotamase_3"/>
    <property type="match status" value="1"/>
</dbReference>
<dbReference type="SUPFAM" id="SSF54534">
    <property type="entry name" value="FKBP-like"/>
    <property type="match status" value="1"/>
</dbReference>
<dbReference type="PROSITE" id="PS01096">
    <property type="entry name" value="PPIC_PPIASE_1"/>
    <property type="match status" value="1"/>
</dbReference>
<dbReference type="PROSITE" id="PS50198">
    <property type="entry name" value="PPIC_PPIASE_2"/>
    <property type="match status" value="1"/>
</dbReference>
<gene>
    <name type="primary">ppiC</name>
    <name type="ordered locus">STM3910</name>
    <name type="ORF">STMD1.80</name>
</gene>
<sequence length="93" mass="10328">MAKMAAALHILVKEEKLALDLLEQIKNGGDFEKLAKKHSICPSGKKGGHLGEFRQGQMVPAFDKVVFSCPVLEPTGPLHTQFGYHIIKVLYRK</sequence>
<name>PPIC_SALTY</name>